<organism>
    <name type="scientific">Halichoerus grypus</name>
    <name type="common">Gray seal</name>
    <name type="synonym">Phoca grypus</name>
    <dbReference type="NCBI Taxonomy" id="9711"/>
    <lineage>
        <taxon>Eukaryota</taxon>
        <taxon>Metazoa</taxon>
        <taxon>Chordata</taxon>
        <taxon>Craniata</taxon>
        <taxon>Vertebrata</taxon>
        <taxon>Euteleostomi</taxon>
        <taxon>Mammalia</taxon>
        <taxon>Eutheria</taxon>
        <taxon>Laurasiatheria</taxon>
        <taxon>Carnivora</taxon>
        <taxon>Caniformia</taxon>
        <taxon>Pinnipedia</taxon>
        <taxon>Phocidae</taxon>
        <taxon>Phocinae</taxon>
        <taxon>Halichoerus</taxon>
    </lineage>
</organism>
<comment type="function">
    <text evidence="1">Core subunit of the mitochondrial membrane respiratory chain NADH dehydrogenase (Complex I) which catalyzes electron transfer from NADH through the respiratory chain, using ubiquinone as an electron acceptor. Essential for the catalytic activity of complex I.</text>
</comment>
<comment type="catalytic activity">
    <reaction evidence="1">
        <text>a ubiquinone + NADH + 5 H(+)(in) = a ubiquinol + NAD(+) + 4 H(+)(out)</text>
        <dbReference type="Rhea" id="RHEA:29091"/>
        <dbReference type="Rhea" id="RHEA-COMP:9565"/>
        <dbReference type="Rhea" id="RHEA-COMP:9566"/>
        <dbReference type="ChEBI" id="CHEBI:15378"/>
        <dbReference type="ChEBI" id="CHEBI:16389"/>
        <dbReference type="ChEBI" id="CHEBI:17976"/>
        <dbReference type="ChEBI" id="CHEBI:57540"/>
        <dbReference type="ChEBI" id="CHEBI:57945"/>
        <dbReference type="EC" id="7.1.1.2"/>
    </reaction>
</comment>
<comment type="subunit">
    <text evidence="1">Core subunit of respiratory chain NADH dehydrogenase (Complex I) which is composed of 45 different subunits. Interacts with TMEM186. Interacts with TMEM242 (By similarity).</text>
</comment>
<comment type="subcellular location">
    <subcellularLocation>
        <location evidence="2">Mitochondrion inner membrane</location>
        <topology evidence="3">Multi-pass membrane protein</topology>
    </subcellularLocation>
</comment>
<comment type="similarity">
    <text evidence="4">Belongs to the complex I subunit 3 family.</text>
</comment>
<name>NU3M_HALGR</name>
<proteinExistence type="inferred from homology"/>
<sequence length="115" mass="12939">MNMALTLFTNTALASLLVLIAFWLPQLNTYSEKVSPYECGFDPMGSARLPFSMKFFLVAITFLLFDLEIALLLPLPWASHTDNLTTMLTMALLLISLLAASLAYEWTEKGLEWTE</sequence>
<gene>
    <name evidence="1" type="primary">MT-ND3</name>
    <name type="synonym">MTND3</name>
    <name type="synonym">NADH3</name>
    <name type="synonym">ND3</name>
</gene>
<evidence type="ECO:0000250" key="1">
    <source>
        <dbReference type="UniProtKB" id="P03897"/>
    </source>
</evidence>
<evidence type="ECO:0000250" key="2">
    <source>
        <dbReference type="UniProtKB" id="P03898"/>
    </source>
</evidence>
<evidence type="ECO:0000255" key="3"/>
<evidence type="ECO:0000305" key="4"/>
<protein>
    <recommendedName>
        <fullName evidence="1">NADH-ubiquinone oxidoreductase chain 3</fullName>
        <ecNumber evidence="1">7.1.1.2</ecNumber>
    </recommendedName>
    <alternativeName>
        <fullName>NADH dehydrogenase subunit 3</fullName>
    </alternativeName>
</protein>
<dbReference type="EC" id="7.1.1.2" evidence="1"/>
<dbReference type="EMBL" id="X72004">
    <property type="protein sequence ID" value="CAA50884.1"/>
    <property type="molecule type" value="Genomic_DNA"/>
</dbReference>
<dbReference type="PIR" id="S41842">
    <property type="entry name" value="S41842"/>
</dbReference>
<dbReference type="RefSeq" id="NP_007076.1">
    <property type="nucleotide sequence ID" value="NC_001602.1"/>
</dbReference>
<dbReference type="SMR" id="P38600"/>
<dbReference type="GeneID" id="807749"/>
<dbReference type="CTD" id="4537"/>
<dbReference type="GO" id="GO:0005743">
    <property type="term" value="C:mitochondrial inner membrane"/>
    <property type="evidence" value="ECO:0000250"/>
    <property type="project" value="UniProtKB"/>
</dbReference>
<dbReference type="GO" id="GO:0030964">
    <property type="term" value="C:NADH dehydrogenase complex"/>
    <property type="evidence" value="ECO:0007669"/>
    <property type="project" value="TreeGrafter"/>
</dbReference>
<dbReference type="GO" id="GO:0008137">
    <property type="term" value="F:NADH dehydrogenase (ubiquinone) activity"/>
    <property type="evidence" value="ECO:0000250"/>
    <property type="project" value="UniProtKB"/>
</dbReference>
<dbReference type="GO" id="GO:0006120">
    <property type="term" value="P:mitochondrial electron transport, NADH to ubiquinone"/>
    <property type="evidence" value="ECO:0000250"/>
    <property type="project" value="UniProtKB"/>
</dbReference>
<dbReference type="FunFam" id="1.20.58.1610:FF:000004">
    <property type="entry name" value="NADH-quinone oxidoreductase subunit A"/>
    <property type="match status" value="1"/>
</dbReference>
<dbReference type="Gene3D" id="1.20.58.1610">
    <property type="entry name" value="NADH:ubiquinone/plastoquinone oxidoreductase, chain 3"/>
    <property type="match status" value="1"/>
</dbReference>
<dbReference type="InterPro" id="IPR000440">
    <property type="entry name" value="NADH_UbQ/plastoQ_OxRdtase_su3"/>
</dbReference>
<dbReference type="InterPro" id="IPR038430">
    <property type="entry name" value="NDAH_ubi_oxred_su3_sf"/>
</dbReference>
<dbReference type="PANTHER" id="PTHR11058">
    <property type="entry name" value="NADH-UBIQUINONE OXIDOREDUCTASE CHAIN 3"/>
    <property type="match status" value="1"/>
</dbReference>
<dbReference type="PANTHER" id="PTHR11058:SF9">
    <property type="entry name" value="NADH-UBIQUINONE OXIDOREDUCTASE CHAIN 3"/>
    <property type="match status" value="1"/>
</dbReference>
<dbReference type="Pfam" id="PF00507">
    <property type="entry name" value="Oxidored_q4"/>
    <property type="match status" value="1"/>
</dbReference>
<keyword id="KW-0249">Electron transport</keyword>
<keyword id="KW-0472">Membrane</keyword>
<keyword id="KW-0496">Mitochondrion</keyword>
<keyword id="KW-0999">Mitochondrion inner membrane</keyword>
<keyword id="KW-0520">NAD</keyword>
<keyword id="KW-0679">Respiratory chain</keyword>
<keyword id="KW-1278">Translocase</keyword>
<keyword id="KW-0812">Transmembrane</keyword>
<keyword id="KW-1133">Transmembrane helix</keyword>
<keyword id="KW-0813">Transport</keyword>
<keyword id="KW-0830">Ubiquinone</keyword>
<geneLocation type="mitochondrion"/>
<accession>P38600</accession>
<feature type="chain" id="PRO_0000117748" description="NADH-ubiquinone oxidoreductase chain 3">
    <location>
        <begin position="1"/>
        <end position="115"/>
    </location>
</feature>
<feature type="transmembrane region" description="Helical" evidence="3">
    <location>
        <begin position="4"/>
        <end position="24"/>
    </location>
</feature>
<feature type="transmembrane region" description="Helical" evidence="3">
    <location>
        <begin position="55"/>
        <end position="75"/>
    </location>
</feature>
<feature type="transmembrane region" description="Helical" evidence="3">
    <location>
        <begin position="84"/>
        <end position="104"/>
    </location>
</feature>
<reference key="1">
    <citation type="journal article" date="1993" name="J. Mol. Evol.">
        <title>The nucleotide sequence of the mitochondrial DNA molecule of the grey seal, Halichoerus grypus, and a comparison with mitochondrial sequences of other true seals.</title>
        <authorList>
            <person name="Arnason U."/>
            <person name="Gullberg A."/>
            <person name="Johnsson E."/>
            <person name="Ledje C."/>
        </authorList>
    </citation>
    <scope>NUCLEOTIDE SEQUENCE [GENOMIC DNA]</scope>
</reference>